<accession>A2QSC9</accession>
<protein>
    <recommendedName>
        <fullName>Autophagy-related protein 2</fullName>
    </recommendedName>
</protein>
<proteinExistence type="inferred from homology"/>
<keyword id="KW-0072">Autophagy</keyword>
<keyword id="KW-0256">Endoplasmic reticulum</keyword>
<keyword id="KW-0445">Lipid transport</keyword>
<keyword id="KW-0472">Membrane</keyword>
<keyword id="KW-0653">Protein transport</keyword>
<keyword id="KW-1185">Reference proteome</keyword>
<keyword id="KW-0813">Transport</keyword>
<comment type="function">
    <text evidence="2">Lipid transfer protein required for autophagosome completion and peroxisome degradation. Tethers the edge of the isolation membrane (IM) to the endoplasmic reticulum (ER) and mediates direct lipid transfer from ER to IM for IM expansion. Atg2 binds to the ER exit site (ERES), which is the membrane source for autophagosome formation, using basic residues in its N-terminal region (NR) and to the expanding edge of the IM through its C-terminal region. The latter binding is assisted by an atg18-PtdIns3P interaction. Atg2 then extracts phospholipids from the membrane source using its NR and transfers them to atg9 to the IM through its predicted beta-sheet-rich structure for membrane expansion.</text>
</comment>
<comment type="catalytic activity">
    <reaction evidence="1">
        <text>a 1,2-diacyl-sn-glycero-3-phosphocholine(in) = a 1,2-diacyl-sn-glycero-3-phosphocholine(out)</text>
        <dbReference type="Rhea" id="RHEA:38571"/>
        <dbReference type="ChEBI" id="CHEBI:57643"/>
    </reaction>
</comment>
<comment type="catalytic activity">
    <reaction evidence="1">
        <text>a 1,2-diacyl-sn-glycero-3-phospho-L-serine(in) = a 1,2-diacyl-sn-glycero-3-phospho-L-serine(out)</text>
        <dbReference type="Rhea" id="RHEA:38663"/>
        <dbReference type="ChEBI" id="CHEBI:57262"/>
    </reaction>
</comment>
<comment type="catalytic activity">
    <reaction evidence="1">
        <text>a 1,2-diacyl-sn-glycero-3-phosphoethanolamine(in) = a 1,2-diacyl-sn-glycero-3-phosphoethanolamine(out)</text>
        <dbReference type="Rhea" id="RHEA:38895"/>
        <dbReference type="ChEBI" id="CHEBI:64612"/>
    </reaction>
</comment>
<comment type="subcellular location">
    <subcellularLocation>
        <location evidence="2">Preautophagosomal structure membrane</location>
        <topology evidence="2">Peripheral membrane protein</topology>
    </subcellularLocation>
    <subcellularLocation>
        <location evidence="2">Endoplasmic reticulum membrane</location>
        <topology evidence="2">Peripheral membrane protein</topology>
    </subcellularLocation>
</comment>
<comment type="similarity">
    <text evidence="4">Belongs to the ATG2 family.</text>
</comment>
<evidence type="ECO:0000250" key="1">
    <source>
        <dbReference type="UniProtKB" id="O94649"/>
    </source>
</evidence>
<evidence type="ECO:0000250" key="2">
    <source>
        <dbReference type="UniProtKB" id="P53855"/>
    </source>
</evidence>
<evidence type="ECO:0000256" key="3">
    <source>
        <dbReference type="SAM" id="MobiDB-lite"/>
    </source>
</evidence>
<evidence type="ECO:0000305" key="4"/>
<name>ATG2_ASPNC</name>
<gene>
    <name type="primary">atg2</name>
    <name type="ORF">An08g10270</name>
</gene>
<organism>
    <name type="scientific">Aspergillus niger (strain ATCC MYA-4892 / CBS 513.88 / FGSC A1513)</name>
    <dbReference type="NCBI Taxonomy" id="425011"/>
    <lineage>
        <taxon>Eukaryota</taxon>
        <taxon>Fungi</taxon>
        <taxon>Dikarya</taxon>
        <taxon>Ascomycota</taxon>
        <taxon>Pezizomycotina</taxon>
        <taxon>Eurotiomycetes</taxon>
        <taxon>Eurotiomycetidae</taxon>
        <taxon>Eurotiales</taxon>
        <taxon>Aspergillaceae</taxon>
        <taxon>Aspergillus</taxon>
        <taxon>Aspergillus subgen. Circumdati</taxon>
    </lineage>
</organism>
<feature type="chain" id="PRO_0000317803" description="Autophagy-related protein 2">
    <location>
        <begin position="1"/>
        <end position="2221"/>
    </location>
</feature>
<feature type="region of interest" description="Disordered" evidence="3">
    <location>
        <begin position="108"/>
        <end position="135"/>
    </location>
</feature>
<feature type="region of interest" description="Disordered" evidence="3">
    <location>
        <begin position="148"/>
        <end position="181"/>
    </location>
</feature>
<feature type="region of interest" description="Disordered" evidence="3">
    <location>
        <begin position="288"/>
        <end position="327"/>
    </location>
</feature>
<feature type="region of interest" description="Disordered" evidence="3">
    <location>
        <begin position="502"/>
        <end position="537"/>
    </location>
</feature>
<feature type="region of interest" description="Disordered" evidence="3">
    <location>
        <begin position="575"/>
        <end position="606"/>
    </location>
</feature>
<feature type="region of interest" description="Disordered" evidence="3">
    <location>
        <begin position="629"/>
        <end position="648"/>
    </location>
</feature>
<feature type="region of interest" description="Disordered" evidence="3">
    <location>
        <begin position="672"/>
        <end position="758"/>
    </location>
</feature>
<feature type="region of interest" description="Disordered" evidence="3">
    <location>
        <begin position="963"/>
        <end position="996"/>
    </location>
</feature>
<feature type="region of interest" description="Disordered" evidence="3">
    <location>
        <begin position="1297"/>
        <end position="1318"/>
    </location>
</feature>
<feature type="region of interest" description="Disordered" evidence="3">
    <location>
        <begin position="1495"/>
        <end position="1514"/>
    </location>
</feature>
<feature type="compositionally biased region" description="Polar residues" evidence="3">
    <location>
        <begin position="157"/>
        <end position="171"/>
    </location>
</feature>
<feature type="compositionally biased region" description="Low complexity" evidence="3">
    <location>
        <begin position="291"/>
        <end position="301"/>
    </location>
</feature>
<feature type="compositionally biased region" description="Pro residues" evidence="3">
    <location>
        <begin position="302"/>
        <end position="312"/>
    </location>
</feature>
<feature type="compositionally biased region" description="Low complexity" evidence="3">
    <location>
        <begin position="510"/>
        <end position="530"/>
    </location>
</feature>
<feature type="compositionally biased region" description="Basic and acidic residues" evidence="3">
    <location>
        <begin position="579"/>
        <end position="600"/>
    </location>
</feature>
<feature type="compositionally biased region" description="Basic and acidic residues" evidence="3">
    <location>
        <begin position="632"/>
        <end position="644"/>
    </location>
</feature>
<feature type="compositionally biased region" description="Polar residues" evidence="3">
    <location>
        <begin position="741"/>
        <end position="756"/>
    </location>
</feature>
<feature type="compositionally biased region" description="Basic and acidic residues" evidence="3">
    <location>
        <begin position="971"/>
        <end position="986"/>
    </location>
</feature>
<feature type="compositionally biased region" description="Basic and acidic residues" evidence="3">
    <location>
        <begin position="1298"/>
        <end position="1311"/>
    </location>
</feature>
<feature type="compositionally biased region" description="Polar residues" evidence="3">
    <location>
        <begin position="1502"/>
        <end position="1511"/>
    </location>
</feature>
<sequence>MAYFLPSFFQKRLLRYALSRLGLVDTEALDLDSLGIRWGQRSTVELRDIGLRLDKLATLLHLPASSELVSARIRFLKITVPADIYSSGIICQASGIDVHLRLLSDETRHAGQGDRPMGSGPGHDSASDPIIPNPTDLAQSFLQAEPKEEREELKAAISSQSQVLHRTSTSGSDDEEELGYGNEGVSLPSFVAAFLKGVADRLQVQVDDISIRVDMETKQDAPLKRQPEDKPDLVTGLLTVGQVKVDAVSSSSNENEASSRNQRRLISLSDINVALVSEPAVFSNYSRFTAPTSPESTSPESPLQPKPSPPPSHVSSPPSEHASEEDTALDLTRSIMFEPSRGMSESKIIEQYAPEMEGSVCTYDGRFSDADTEEETRSHGNMGESQNLLVDDEILDNPAYLDSVIDSHLHDDELDGIGHFPPEVGQRALGNEDTPRLRTPELHAAGSASHYSDTQNAMILAPRSQVPAVTSLAQDKLQIPEAVDIATRPALPAIELEVTQDPQPCADNQTSPVTSVPPSEASSSSSTSGSFNQDELSESRLFSNEEAQSMYMSAVSHDSMSRSFMPNIPGAWDSPESTVVRDSHAHMHHENGRDVQHMDPDHEDDDEAVATPKLTAQAGMHISQECLIDDSPEAHRDPTDKELSRSSSGLNKFTDVARRFFSIDKVVISIPSMDEDGDSADNTPSASYTEEDTRGLEETTACLRDSATEDYFAPPGRKASTRTRSDTIRPASYGYEGAEKGSSQPSQSDGQAQSRRSPNDMEIEVFSAELQFDIAIGWLVLKVGHKILHAFSNDSEVSQQTGQPQEEVQKRQAIKLALRKFSIKFVEHVPGHSYPAETDSSPFFGLLHNDILLQTCLSGLEAHLSIDKDITKLHLNIKKFSLGFASEHLISFSEDFKMRDSVRDVLSAEQGDIDLSITKSPDSTTVNLMTLPLQLNLNIQRLEEAIGWFGGLSTILELGNSISSASSGKGPKKEAPKRPRGVHFEEFPPPAASERTGSAPLKVNVRIGGLAADVVGETHYVKLRTTAAKIISRSSGVAVQIDKAKLTGPLPLDETRDAPAKLSLTDIRIEYRFSPKEEDLDRLLGLITPSKDKYDEDDDIMLDTLFRQRRQGSVLCLTISGARVAVSRTTDLDSISQLADELSRLSNVTKYLPEDDRPGVLTLALVRELEVQVHIGGKVGEMSAILRNTELAFISLPSLIAAQLGSITVARNRDEELVGEASAIGHKSSLSQSPLPVLMARYIADEMDPTVKVKLHNFRAEYTLPSIIAFLGLSDDMTTGDVAANMASSLANLAELQPPHHDVQLPEKGGRSDTPSKPIKLTVDLRDCVLGLNPRGTGAKGLVVLTTAKFSGAIHDPVSSDATLELRKASLMIIDDVANVGYADNVQRRSSAPPHSNQVQSFIDHGFVTVCTISSATATVKIMRLSDDGAKSLDVELRDDLLILETCADSTQTLISIVNGLQPPTPPSAAAKYRTEVLPIQDMLSSFTGDAFFTDMPEPPETTDSPDQNQGAGHLEDERDYVSDFKHVSAVPEHGSLTEGMMASGSNELLDSFHSQYYVSSSISELDFREDHFAQKSAVGGTAHRWDSTQNTYGLSDDSKLQKSPLRIRVRDAHVIWNLFDGYDWQRTRDTISKAVKDVERKAIERRARAGSRASPSFDEEEESVIGDCLFNSIYIGVPANKDPRDIRNDINRNIDDLASETGSYATTTTVTGATVRQSQSPSVRGKKLRLSRSKYHKMTFELKGICADLVVFPPDSGETQSSLDVRIKDLEVFDHVPTSTWKKFATYMHEAGEKESGTSMVHLEILTVRPVPQLAATEIVLKATILPLRLHVDQDALDFICRFFEFRDDSAPTPTAPSDVPFLQRVEINAVPVRLDFKPKRVDYAGLRSGRTTEFMNFFILDAADMTMRHVIIYGVSGFDKLGQTLNDIWMPDIKRNQLPGVLAGLAPIRSLVNVGGGVKDLVAVPVREYRKDGRLVRSIQKGALSFAKTTSNELVKLGAKLAIGTQTVLQGAEDLLTTPNASGAGVEDEYADDEEAKKISLYADQPVGVVQGLRGAFRGLERDLLLTRDAIVAVPGEVIESGSAKAAAKAVWKRAPTVVLRPAIGVSKAVGQTLLGAGNTLDPSNRRKMEDVSYTFPQRADSILTLLAEIQAPLTTFVAITLAVLSASSSSWDGYGAIDWDIYRSRSHIHLRAGRYRSTQDDNKMDACSHLKDFIRGGS</sequence>
<dbReference type="EMBL" id="AM270182">
    <property type="protein sequence ID" value="CAK96773.1"/>
    <property type="molecule type" value="Genomic_DNA"/>
</dbReference>
<dbReference type="EnsemblFungi" id="CAK96773">
    <property type="protein sequence ID" value="CAK96773"/>
    <property type="gene ID" value="An08g10270"/>
</dbReference>
<dbReference type="VEuPathDB" id="FungiDB:An08g10270"/>
<dbReference type="HOGENOM" id="CLU_000626_1_0_1"/>
<dbReference type="Proteomes" id="UP000006706">
    <property type="component" value="Chromosome 8R"/>
</dbReference>
<dbReference type="GO" id="GO:0005789">
    <property type="term" value="C:endoplasmic reticulum membrane"/>
    <property type="evidence" value="ECO:0007669"/>
    <property type="project" value="UniProtKB-SubCell"/>
</dbReference>
<dbReference type="GO" id="GO:0061908">
    <property type="term" value="C:phagophore"/>
    <property type="evidence" value="ECO:0007669"/>
    <property type="project" value="TreeGrafter"/>
</dbReference>
<dbReference type="GO" id="GO:0034045">
    <property type="term" value="C:phagophore assembly site membrane"/>
    <property type="evidence" value="ECO:0007669"/>
    <property type="project" value="UniProtKB-SubCell"/>
</dbReference>
<dbReference type="GO" id="GO:0032266">
    <property type="term" value="F:phosphatidylinositol-3-phosphate binding"/>
    <property type="evidence" value="ECO:0007669"/>
    <property type="project" value="TreeGrafter"/>
</dbReference>
<dbReference type="GO" id="GO:0043495">
    <property type="term" value="F:protein-membrane adaptor activity"/>
    <property type="evidence" value="ECO:0007669"/>
    <property type="project" value="TreeGrafter"/>
</dbReference>
<dbReference type="GO" id="GO:0000045">
    <property type="term" value="P:autophagosome assembly"/>
    <property type="evidence" value="ECO:0007669"/>
    <property type="project" value="TreeGrafter"/>
</dbReference>
<dbReference type="GO" id="GO:0000422">
    <property type="term" value="P:autophagy of mitochondrion"/>
    <property type="evidence" value="ECO:0007669"/>
    <property type="project" value="TreeGrafter"/>
</dbReference>
<dbReference type="GO" id="GO:0061723">
    <property type="term" value="P:glycophagy"/>
    <property type="evidence" value="ECO:0007669"/>
    <property type="project" value="TreeGrafter"/>
</dbReference>
<dbReference type="GO" id="GO:0006869">
    <property type="term" value="P:lipid transport"/>
    <property type="evidence" value="ECO:0007669"/>
    <property type="project" value="UniProtKB-KW"/>
</dbReference>
<dbReference type="GO" id="GO:0034727">
    <property type="term" value="P:piecemeal microautophagy of the nucleus"/>
    <property type="evidence" value="ECO:0007669"/>
    <property type="project" value="TreeGrafter"/>
</dbReference>
<dbReference type="GO" id="GO:0015031">
    <property type="term" value="P:protein transport"/>
    <property type="evidence" value="ECO:0007669"/>
    <property type="project" value="UniProtKB-KW"/>
</dbReference>
<dbReference type="GO" id="GO:0061709">
    <property type="term" value="P:reticulophagy"/>
    <property type="evidence" value="ECO:0007669"/>
    <property type="project" value="TreeGrafter"/>
</dbReference>
<dbReference type="InterPro" id="IPR026849">
    <property type="entry name" value="ATG2"/>
</dbReference>
<dbReference type="PANTHER" id="PTHR13190">
    <property type="entry name" value="AUTOPHAGY-RELATED 2, ISOFORM A"/>
    <property type="match status" value="1"/>
</dbReference>
<dbReference type="PANTHER" id="PTHR13190:SF1">
    <property type="entry name" value="AUTOPHAGY-RELATED 2, ISOFORM A"/>
    <property type="match status" value="1"/>
</dbReference>
<dbReference type="Pfam" id="PF13329">
    <property type="entry name" value="ATG2_CAD"/>
    <property type="match status" value="1"/>
</dbReference>
<reference key="1">
    <citation type="journal article" date="2007" name="Nat. Biotechnol.">
        <title>Genome sequencing and analysis of the versatile cell factory Aspergillus niger CBS 513.88.</title>
        <authorList>
            <person name="Pel H.J."/>
            <person name="de Winde J.H."/>
            <person name="Archer D.B."/>
            <person name="Dyer P.S."/>
            <person name="Hofmann G."/>
            <person name="Schaap P.J."/>
            <person name="Turner G."/>
            <person name="de Vries R.P."/>
            <person name="Albang R."/>
            <person name="Albermann K."/>
            <person name="Andersen M.R."/>
            <person name="Bendtsen J.D."/>
            <person name="Benen J.A.E."/>
            <person name="van den Berg M."/>
            <person name="Breestraat S."/>
            <person name="Caddick M.X."/>
            <person name="Contreras R."/>
            <person name="Cornell M."/>
            <person name="Coutinho P.M."/>
            <person name="Danchin E.G.J."/>
            <person name="Debets A.J.M."/>
            <person name="Dekker P."/>
            <person name="van Dijck P.W.M."/>
            <person name="van Dijk A."/>
            <person name="Dijkhuizen L."/>
            <person name="Driessen A.J.M."/>
            <person name="d'Enfert C."/>
            <person name="Geysens S."/>
            <person name="Goosen C."/>
            <person name="Groot G.S.P."/>
            <person name="de Groot P.W.J."/>
            <person name="Guillemette T."/>
            <person name="Henrissat B."/>
            <person name="Herweijer M."/>
            <person name="van den Hombergh J.P.T.W."/>
            <person name="van den Hondel C.A.M.J.J."/>
            <person name="van der Heijden R.T.J.M."/>
            <person name="van der Kaaij R.M."/>
            <person name="Klis F.M."/>
            <person name="Kools H.J."/>
            <person name="Kubicek C.P."/>
            <person name="van Kuyk P.A."/>
            <person name="Lauber J."/>
            <person name="Lu X."/>
            <person name="van der Maarel M.J.E.C."/>
            <person name="Meulenberg R."/>
            <person name="Menke H."/>
            <person name="Mortimer M.A."/>
            <person name="Nielsen J."/>
            <person name="Oliver S.G."/>
            <person name="Olsthoorn M."/>
            <person name="Pal K."/>
            <person name="van Peij N.N.M.E."/>
            <person name="Ram A.F.J."/>
            <person name="Rinas U."/>
            <person name="Roubos J.A."/>
            <person name="Sagt C.M.J."/>
            <person name="Schmoll M."/>
            <person name="Sun J."/>
            <person name="Ussery D."/>
            <person name="Varga J."/>
            <person name="Vervecken W."/>
            <person name="van de Vondervoort P.J.J."/>
            <person name="Wedler H."/>
            <person name="Woesten H.A.B."/>
            <person name="Zeng A.-P."/>
            <person name="van Ooyen A.J.J."/>
            <person name="Visser J."/>
            <person name="Stam H."/>
        </authorList>
    </citation>
    <scope>NUCLEOTIDE SEQUENCE [LARGE SCALE GENOMIC DNA]</scope>
    <source>
        <strain>ATCC MYA-4892 / CBS 513.88 / FGSC A1513</strain>
    </source>
</reference>